<protein>
    <recommendedName>
        <fullName evidence="1">Large ribosomal subunit protein uL3</fullName>
    </recommendedName>
    <alternativeName>
        <fullName evidence="3">50S ribosomal protein L3</fullName>
    </alternativeName>
</protein>
<accession>Q8CWV8</accession>
<reference key="1">
    <citation type="journal article" date="2001" name="J. Bacteriol.">
        <title>Genome of the bacterium Streptococcus pneumoniae strain R6.</title>
        <authorList>
            <person name="Hoskins J."/>
            <person name="Alborn W.E. Jr."/>
            <person name="Arnold J."/>
            <person name="Blaszczak L.C."/>
            <person name="Burgett S."/>
            <person name="DeHoff B.S."/>
            <person name="Estrem S.T."/>
            <person name="Fritz L."/>
            <person name="Fu D.-J."/>
            <person name="Fuller W."/>
            <person name="Geringer C."/>
            <person name="Gilmour R."/>
            <person name="Glass J.S."/>
            <person name="Khoja H."/>
            <person name="Kraft A.R."/>
            <person name="Lagace R.E."/>
            <person name="LeBlanc D.J."/>
            <person name="Lee L.N."/>
            <person name="Lefkowitz E.J."/>
            <person name="Lu J."/>
            <person name="Matsushima P."/>
            <person name="McAhren S.M."/>
            <person name="McHenney M."/>
            <person name="McLeaster K."/>
            <person name="Mundy C.W."/>
            <person name="Nicas T.I."/>
            <person name="Norris F.H."/>
            <person name="O'Gara M."/>
            <person name="Peery R.B."/>
            <person name="Robertson G.T."/>
            <person name="Rockey P."/>
            <person name="Sun P.-M."/>
            <person name="Winkler M.E."/>
            <person name="Yang Y."/>
            <person name="Young-Bellido M."/>
            <person name="Zhao G."/>
            <person name="Zook C.A."/>
            <person name="Baltz R.H."/>
            <person name="Jaskunas S.R."/>
            <person name="Rosteck P.R. Jr."/>
            <person name="Skatrud P.L."/>
            <person name="Glass J.I."/>
        </authorList>
    </citation>
    <scope>NUCLEOTIDE SEQUENCE [LARGE SCALE GENOMIC DNA]</scope>
    <source>
        <strain>ATCC BAA-255 / R6</strain>
    </source>
</reference>
<dbReference type="EMBL" id="AE007317">
    <property type="protein sequence ID" value="AAK98992.1"/>
    <property type="molecule type" value="Genomic_DNA"/>
</dbReference>
<dbReference type="PIR" id="D95024">
    <property type="entry name" value="D95024"/>
</dbReference>
<dbReference type="PIR" id="D97895">
    <property type="entry name" value="D97895"/>
</dbReference>
<dbReference type="RefSeq" id="NP_357782.1">
    <property type="nucleotide sequence ID" value="NC_003098.1"/>
</dbReference>
<dbReference type="RefSeq" id="WP_000160197.1">
    <property type="nucleotide sequence ID" value="NC_003098.1"/>
</dbReference>
<dbReference type="SMR" id="Q8CWV8"/>
<dbReference type="STRING" id="171101.spr0188"/>
<dbReference type="GeneID" id="93738957"/>
<dbReference type="KEGG" id="spr:spr0188"/>
<dbReference type="PATRIC" id="fig|171101.6.peg.220"/>
<dbReference type="eggNOG" id="COG0087">
    <property type="taxonomic scope" value="Bacteria"/>
</dbReference>
<dbReference type="HOGENOM" id="CLU_044142_4_1_9"/>
<dbReference type="PRO" id="PR:Q8CWV8"/>
<dbReference type="Proteomes" id="UP000000586">
    <property type="component" value="Chromosome"/>
</dbReference>
<dbReference type="GO" id="GO:0022625">
    <property type="term" value="C:cytosolic large ribosomal subunit"/>
    <property type="evidence" value="ECO:0000318"/>
    <property type="project" value="GO_Central"/>
</dbReference>
<dbReference type="GO" id="GO:0019843">
    <property type="term" value="F:rRNA binding"/>
    <property type="evidence" value="ECO:0007669"/>
    <property type="project" value="UniProtKB-UniRule"/>
</dbReference>
<dbReference type="GO" id="GO:0003735">
    <property type="term" value="F:structural constituent of ribosome"/>
    <property type="evidence" value="ECO:0000318"/>
    <property type="project" value="GO_Central"/>
</dbReference>
<dbReference type="GO" id="GO:0006412">
    <property type="term" value="P:translation"/>
    <property type="evidence" value="ECO:0007669"/>
    <property type="project" value="UniProtKB-UniRule"/>
</dbReference>
<dbReference type="FunFam" id="2.40.30.10:FF:000004">
    <property type="entry name" value="50S ribosomal protein L3"/>
    <property type="match status" value="1"/>
</dbReference>
<dbReference type="FunFam" id="3.30.160.810:FF:000002">
    <property type="entry name" value="50S ribosomal protein L3"/>
    <property type="match status" value="1"/>
</dbReference>
<dbReference type="Gene3D" id="3.30.160.810">
    <property type="match status" value="1"/>
</dbReference>
<dbReference type="Gene3D" id="2.40.30.10">
    <property type="entry name" value="Translation factors"/>
    <property type="match status" value="1"/>
</dbReference>
<dbReference type="HAMAP" id="MF_01325_B">
    <property type="entry name" value="Ribosomal_uL3_B"/>
    <property type="match status" value="1"/>
</dbReference>
<dbReference type="InterPro" id="IPR000597">
    <property type="entry name" value="Ribosomal_uL3"/>
</dbReference>
<dbReference type="InterPro" id="IPR019927">
    <property type="entry name" value="Ribosomal_uL3_bac/org-type"/>
</dbReference>
<dbReference type="InterPro" id="IPR019926">
    <property type="entry name" value="Ribosomal_uL3_CS"/>
</dbReference>
<dbReference type="InterPro" id="IPR009000">
    <property type="entry name" value="Transl_B-barrel_sf"/>
</dbReference>
<dbReference type="NCBIfam" id="TIGR03625">
    <property type="entry name" value="L3_bact"/>
    <property type="match status" value="1"/>
</dbReference>
<dbReference type="PANTHER" id="PTHR11229">
    <property type="entry name" value="50S RIBOSOMAL PROTEIN L3"/>
    <property type="match status" value="1"/>
</dbReference>
<dbReference type="PANTHER" id="PTHR11229:SF16">
    <property type="entry name" value="LARGE RIBOSOMAL SUBUNIT PROTEIN UL3C"/>
    <property type="match status" value="1"/>
</dbReference>
<dbReference type="Pfam" id="PF00297">
    <property type="entry name" value="Ribosomal_L3"/>
    <property type="match status" value="1"/>
</dbReference>
<dbReference type="SUPFAM" id="SSF50447">
    <property type="entry name" value="Translation proteins"/>
    <property type="match status" value="1"/>
</dbReference>
<dbReference type="PROSITE" id="PS00474">
    <property type="entry name" value="RIBOSOMAL_L3"/>
    <property type="match status" value="1"/>
</dbReference>
<sequence length="208" mass="22178">MTKGILGKKVGMTQIFTEAGELIPVTVIEATPNVVLQVKTVETDGYNAIQVGFDDKREVLSNKPAKGHVAKANTAPKRFIREFKNVEGLEVGAEITVETFAAGDVVDVTGTSKGKGFQGVIKRHGQSRGPMAHGSRYHRRPGSMGPVAPNRVFKGKNLAGRMGGDRVTIQNLEVVQVVPEKNVILIKGNVPGAKKSLITIKSAVKAGK</sequence>
<proteinExistence type="inferred from homology"/>
<evidence type="ECO:0000255" key="1">
    <source>
        <dbReference type="HAMAP-Rule" id="MF_01325"/>
    </source>
</evidence>
<evidence type="ECO:0000256" key="2">
    <source>
        <dbReference type="SAM" id="MobiDB-lite"/>
    </source>
</evidence>
<evidence type="ECO:0000305" key="3"/>
<feature type="chain" id="PRO_0000077169" description="Large ribosomal subunit protein uL3">
    <location>
        <begin position="1"/>
        <end position="208"/>
    </location>
</feature>
<feature type="region of interest" description="Disordered" evidence="2">
    <location>
        <begin position="116"/>
        <end position="148"/>
    </location>
</feature>
<gene>
    <name evidence="1" type="primary">rplC</name>
    <name type="ordered locus">spr0188</name>
</gene>
<keyword id="KW-1185">Reference proteome</keyword>
<keyword id="KW-0687">Ribonucleoprotein</keyword>
<keyword id="KW-0689">Ribosomal protein</keyword>
<keyword id="KW-0694">RNA-binding</keyword>
<keyword id="KW-0699">rRNA-binding</keyword>
<comment type="function">
    <text evidence="1">One of the primary rRNA binding proteins, it binds directly near the 3'-end of the 23S rRNA, where it nucleates assembly of the 50S subunit.</text>
</comment>
<comment type="subunit">
    <text evidence="1">Part of the 50S ribosomal subunit. Forms a cluster with proteins L14 and L19.</text>
</comment>
<comment type="similarity">
    <text evidence="1">Belongs to the universal ribosomal protein uL3 family.</text>
</comment>
<name>RL3_STRR6</name>
<organism>
    <name type="scientific">Streptococcus pneumoniae (strain ATCC BAA-255 / R6)</name>
    <dbReference type="NCBI Taxonomy" id="171101"/>
    <lineage>
        <taxon>Bacteria</taxon>
        <taxon>Bacillati</taxon>
        <taxon>Bacillota</taxon>
        <taxon>Bacilli</taxon>
        <taxon>Lactobacillales</taxon>
        <taxon>Streptococcaceae</taxon>
        <taxon>Streptococcus</taxon>
    </lineage>
</organism>